<protein>
    <recommendedName>
        <fullName evidence="1">Small ribosomal subunit protein uS7</fullName>
    </recommendedName>
    <alternativeName>
        <fullName evidence="2">30S ribosomal protein S7</fullName>
    </alternativeName>
</protein>
<gene>
    <name evidence="1" type="primary">rpsG</name>
    <name type="ordered locus">WP0563</name>
</gene>
<organism>
    <name type="scientific">Wolbachia pipientis subsp. Culex pipiens (strain wPip)</name>
    <dbReference type="NCBI Taxonomy" id="570417"/>
    <lineage>
        <taxon>Bacteria</taxon>
        <taxon>Pseudomonadati</taxon>
        <taxon>Pseudomonadota</taxon>
        <taxon>Alphaproteobacteria</taxon>
        <taxon>Rickettsiales</taxon>
        <taxon>Anaplasmataceae</taxon>
        <taxon>Wolbachieae</taxon>
        <taxon>Wolbachia</taxon>
    </lineage>
</organism>
<feature type="chain" id="PRO_1000126024" description="Small ribosomal subunit protein uS7">
    <location>
        <begin position="1"/>
        <end position="158"/>
    </location>
</feature>
<comment type="function">
    <text evidence="1">One of the primary rRNA binding proteins, it binds directly to 16S rRNA where it nucleates assembly of the head domain of the 30S subunit. Is located at the subunit interface close to the decoding center, probably blocks exit of the E-site tRNA.</text>
</comment>
<comment type="subunit">
    <text evidence="1">Part of the 30S ribosomal subunit. Contacts proteins S9 and S11.</text>
</comment>
<comment type="similarity">
    <text evidence="1">Belongs to the universal ribosomal protein uS7 family.</text>
</comment>
<name>RS7_WOLPP</name>
<reference key="1">
    <citation type="journal article" date="2008" name="Mol. Biol. Evol.">
        <title>Genome evolution of Wolbachia strain wPip from the Culex pipiens group.</title>
        <authorList>
            <person name="Klasson L."/>
            <person name="Walker T."/>
            <person name="Sebaihia M."/>
            <person name="Sanders M.J."/>
            <person name="Quail M.A."/>
            <person name="Lord A."/>
            <person name="Sanders S."/>
            <person name="Earl J."/>
            <person name="O'Neill S.L."/>
            <person name="Thomson N."/>
            <person name="Sinkins S.P."/>
            <person name="Parkhill J."/>
        </authorList>
    </citation>
    <scope>NUCLEOTIDE SEQUENCE [LARGE SCALE GENOMIC DNA]</scope>
    <source>
        <strain>wPip</strain>
    </source>
</reference>
<sequence length="158" mass="17746">MARRNKAKKRTSPDSRYGSVLLMRFINIIMKCGKKSIAEKIAYSALSLAEKKIGKDALSIFETAVENVTPSIEVRSRRIGGATYQVPVEIRQDRAISLALRWIARATSAARKKSGRTTVYCLQSEILDAYNKCGGAFKMCEEKYKMAEANKAFSHLRF</sequence>
<keyword id="KW-0687">Ribonucleoprotein</keyword>
<keyword id="KW-0689">Ribosomal protein</keyword>
<keyword id="KW-0694">RNA-binding</keyword>
<keyword id="KW-0699">rRNA-binding</keyword>
<keyword id="KW-0820">tRNA-binding</keyword>
<proteinExistence type="inferred from homology"/>
<accession>B3CLA4</accession>
<dbReference type="EMBL" id="AM999887">
    <property type="protein sequence ID" value="CAQ54671.1"/>
    <property type="molecule type" value="Genomic_DNA"/>
</dbReference>
<dbReference type="RefSeq" id="WP_006014699.1">
    <property type="nucleotide sequence ID" value="NC_010981.1"/>
</dbReference>
<dbReference type="SMR" id="B3CLA4"/>
<dbReference type="KEGG" id="wpi:WP0563"/>
<dbReference type="eggNOG" id="COG0049">
    <property type="taxonomic scope" value="Bacteria"/>
</dbReference>
<dbReference type="HOGENOM" id="CLU_072226_1_1_5"/>
<dbReference type="Proteomes" id="UP000008814">
    <property type="component" value="Chromosome"/>
</dbReference>
<dbReference type="GO" id="GO:0015935">
    <property type="term" value="C:small ribosomal subunit"/>
    <property type="evidence" value="ECO:0007669"/>
    <property type="project" value="InterPro"/>
</dbReference>
<dbReference type="GO" id="GO:0019843">
    <property type="term" value="F:rRNA binding"/>
    <property type="evidence" value="ECO:0007669"/>
    <property type="project" value="UniProtKB-UniRule"/>
</dbReference>
<dbReference type="GO" id="GO:0003735">
    <property type="term" value="F:structural constituent of ribosome"/>
    <property type="evidence" value="ECO:0007669"/>
    <property type="project" value="InterPro"/>
</dbReference>
<dbReference type="GO" id="GO:0000049">
    <property type="term" value="F:tRNA binding"/>
    <property type="evidence" value="ECO:0007669"/>
    <property type="project" value="UniProtKB-UniRule"/>
</dbReference>
<dbReference type="GO" id="GO:0006412">
    <property type="term" value="P:translation"/>
    <property type="evidence" value="ECO:0007669"/>
    <property type="project" value="UniProtKB-UniRule"/>
</dbReference>
<dbReference type="CDD" id="cd14869">
    <property type="entry name" value="uS7_Bacteria"/>
    <property type="match status" value="1"/>
</dbReference>
<dbReference type="Gene3D" id="1.10.455.10">
    <property type="entry name" value="Ribosomal protein S7 domain"/>
    <property type="match status" value="1"/>
</dbReference>
<dbReference type="HAMAP" id="MF_00480_B">
    <property type="entry name" value="Ribosomal_uS7_B"/>
    <property type="match status" value="1"/>
</dbReference>
<dbReference type="InterPro" id="IPR000235">
    <property type="entry name" value="Ribosomal_uS7"/>
</dbReference>
<dbReference type="InterPro" id="IPR005717">
    <property type="entry name" value="Ribosomal_uS7_bac/org-type"/>
</dbReference>
<dbReference type="InterPro" id="IPR023798">
    <property type="entry name" value="Ribosomal_uS7_dom"/>
</dbReference>
<dbReference type="InterPro" id="IPR036823">
    <property type="entry name" value="Ribosomal_uS7_dom_sf"/>
</dbReference>
<dbReference type="NCBIfam" id="TIGR01029">
    <property type="entry name" value="rpsG_bact"/>
    <property type="match status" value="1"/>
</dbReference>
<dbReference type="PANTHER" id="PTHR11205">
    <property type="entry name" value="RIBOSOMAL PROTEIN S7"/>
    <property type="match status" value="1"/>
</dbReference>
<dbReference type="Pfam" id="PF00177">
    <property type="entry name" value="Ribosomal_S7"/>
    <property type="match status" value="1"/>
</dbReference>
<dbReference type="PIRSF" id="PIRSF002122">
    <property type="entry name" value="RPS7p_RPS7a_RPS5e_RPS7o"/>
    <property type="match status" value="1"/>
</dbReference>
<dbReference type="SUPFAM" id="SSF47973">
    <property type="entry name" value="Ribosomal protein S7"/>
    <property type="match status" value="1"/>
</dbReference>
<evidence type="ECO:0000255" key="1">
    <source>
        <dbReference type="HAMAP-Rule" id="MF_00480"/>
    </source>
</evidence>
<evidence type="ECO:0000305" key="2"/>